<organism>
    <name type="scientific">Pantholops hodgsonii</name>
    <name type="common">Chiru</name>
    <name type="synonym">Tibetan antelope</name>
    <dbReference type="NCBI Taxonomy" id="59538"/>
    <lineage>
        <taxon>Eukaryota</taxon>
        <taxon>Metazoa</taxon>
        <taxon>Chordata</taxon>
        <taxon>Craniata</taxon>
        <taxon>Vertebrata</taxon>
        <taxon>Euteleostomi</taxon>
        <taxon>Mammalia</taxon>
        <taxon>Eutheria</taxon>
        <taxon>Laurasiatheria</taxon>
        <taxon>Artiodactyla</taxon>
        <taxon>Ruminantia</taxon>
        <taxon>Pecora</taxon>
        <taxon>Bovidae</taxon>
        <taxon>Antilopinae</taxon>
        <taxon>Pantholops</taxon>
    </lineage>
</organism>
<dbReference type="EMBL" id="DQ650713">
    <property type="protein sequence ID" value="ABG48508.1"/>
    <property type="molecule type" value="mRNA"/>
</dbReference>
<dbReference type="SMR" id="Q0ZA50"/>
<dbReference type="GO" id="GO:0072562">
    <property type="term" value="C:blood microparticle"/>
    <property type="evidence" value="ECO:0007669"/>
    <property type="project" value="TreeGrafter"/>
</dbReference>
<dbReference type="GO" id="GO:0031838">
    <property type="term" value="C:haptoglobin-hemoglobin complex"/>
    <property type="evidence" value="ECO:0007669"/>
    <property type="project" value="TreeGrafter"/>
</dbReference>
<dbReference type="GO" id="GO:0005833">
    <property type="term" value="C:hemoglobin complex"/>
    <property type="evidence" value="ECO:0007669"/>
    <property type="project" value="InterPro"/>
</dbReference>
<dbReference type="GO" id="GO:0031720">
    <property type="term" value="F:haptoglobin binding"/>
    <property type="evidence" value="ECO:0007669"/>
    <property type="project" value="TreeGrafter"/>
</dbReference>
<dbReference type="GO" id="GO:0020037">
    <property type="term" value="F:heme binding"/>
    <property type="evidence" value="ECO:0007669"/>
    <property type="project" value="InterPro"/>
</dbReference>
<dbReference type="GO" id="GO:0005506">
    <property type="term" value="F:iron ion binding"/>
    <property type="evidence" value="ECO:0007669"/>
    <property type="project" value="InterPro"/>
</dbReference>
<dbReference type="GO" id="GO:0043177">
    <property type="term" value="F:organic acid binding"/>
    <property type="evidence" value="ECO:0007669"/>
    <property type="project" value="TreeGrafter"/>
</dbReference>
<dbReference type="GO" id="GO:0019825">
    <property type="term" value="F:oxygen binding"/>
    <property type="evidence" value="ECO:0007669"/>
    <property type="project" value="InterPro"/>
</dbReference>
<dbReference type="GO" id="GO:0005344">
    <property type="term" value="F:oxygen carrier activity"/>
    <property type="evidence" value="ECO:0007669"/>
    <property type="project" value="UniProtKB-KW"/>
</dbReference>
<dbReference type="GO" id="GO:0004601">
    <property type="term" value="F:peroxidase activity"/>
    <property type="evidence" value="ECO:0007669"/>
    <property type="project" value="TreeGrafter"/>
</dbReference>
<dbReference type="GO" id="GO:0042744">
    <property type="term" value="P:hydrogen peroxide catabolic process"/>
    <property type="evidence" value="ECO:0007669"/>
    <property type="project" value="TreeGrafter"/>
</dbReference>
<dbReference type="CDD" id="cd08927">
    <property type="entry name" value="Hb-alpha-like"/>
    <property type="match status" value="1"/>
</dbReference>
<dbReference type="FunFam" id="1.10.490.10:FF:000002">
    <property type="entry name" value="Hemoglobin subunit alpha"/>
    <property type="match status" value="1"/>
</dbReference>
<dbReference type="Gene3D" id="1.10.490.10">
    <property type="entry name" value="Globins"/>
    <property type="match status" value="1"/>
</dbReference>
<dbReference type="InterPro" id="IPR000971">
    <property type="entry name" value="Globin"/>
</dbReference>
<dbReference type="InterPro" id="IPR009050">
    <property type="entry name" value="Globin-like_sf"/>
</dbReference>
<dbReference type="InterPro" id="IPR012292">
    <property type="entry name" value="Globin/Proto"/>
</dbReference>
<dbReference type="InterPro" id="IPR002338">
    <property type="entry name" value="Hemoglobin_a-typ"/>
</dbReference>
<dbReference type="InterPro" id="IPR050056">
    <property type="entry name" value="Hemoglobin_oxygen_transport"/>
</dbReference>
<dbReference type="InterPro" id="IPR002339">
    <property type="entry name" value="Hemoglobin_pi"/>
</dbReference>
<dbReference type="PANTHER" id="PTHR11442">
    <property type="entry name" value="HEMOGLOBIN FAMILY MEMBER"/>
    <property type="match status" value="1"/>
</dbReference>
<dbReference type="PANTHER" id="PTHR11442:SF48">
    <property type="entry name" value="HEMOGLOBIN SUBUNIT ALPHA"/>
    <property type="match status" value="1"/>
</dbReference>
<dbReference type="Pfam" id="PF00042">
    <property type="entry name" value="Globin"/>
    <property type="match status" value="1"/>
</dbReference>
<dbReference type="PRINTS" id="PR00612">
    <property type="entry name" value="ALPHAHAEM"/>
</dbReference>
<dbReference type="PRINTS" id="PR00815">
    <property type="entry name" value="PIHAEM"/>
</dbReference>
<dbReference type="SUPFAM" id="SSF46458">
    <property type="entry name" value="Globin-like"/>
    <property type="match status" value="1"/>
</dbReference>
<dbReference type="PROSITE" id="PS01033">
    <property type="entry name" value="GLOBIN"/>
    <property type="match status" value="1"/>
</dbReference>
<evidence type="ECO:0000250" key="1">
    <source>
        <dbReference type="UniProtKB" id="P01942"/>
    </source>
</evidence>
<evidence type="ECO:0000250" key="2">
    <source>
        <dbReference type="UniProtKB" id="P01946"/>
    </source>
</evidence>
<evidence type="ECO:0000250" key="3">
    <source>
        <dbReference type="UniProtKB" id="P69905"/>
    </source>
</evidence>
<evidence type="ECO:0000255" key="4">
    <source>
        <dbReference type="PROSITE-ProRule" id="PRU00238"/>
    </source>
</evidence>
<gene>
    <name type="primary">HBA</name>
</gene>
<name>HBA_PANHO</name>
<comment type="function">
    <text>Involved in oxygen transport from the lung to the various peripheral tissues.</text>
</comment>
<comment type="function">
    <molecule>Hemopressin</molecule>
    <text evidence="2">Hemopressin acts as an antagonist peptide of the cannabinoid receptor CNR1. Hemopressin-binding efficiently blocks cannabinoid receptor CNR1 and subsequent signaling.</text>
</comment>
<comment type="subunit">
    <text>Heterotetramer of two alpha chains and two beta chains.</text>
</comment>
<comment type="tissue specificity">
    <text>Red blood cells.</text>
</comment>
<comment type="similarity">
    <text evidence="4">Belongs to the globin family.</text>
</comment>
<proteinExistence type="evidence at transcript level"/>
<protein>
    <recommendedName>
        <fullName>Hemoglobin subunit alpha</fullName>
    </recommendedName>
    <alternativeName>
        <fullName>Alpha-globin</fullName>
    </alternativeName>
    <alternativeName>
        <fullName>Hemoglobin alpha chain</fullName>
    </alternativeName>
    <component>
        <recommendedName>
            <fullName evidence="2">Hemopressin</fullName>
        </recommendedName>
    </component>
</protein>
<keyword id="KW-0007">Acetylation</keyword>
<keyword id="KW-0349">Heme</keyword>
<keyword id="KW-0408">Iron</keyword>
<keyword id="KW-0479">Metal-binding</keyword>
<keyword id="KW-0561">Oxygen transport</keyword>
<keyword id="KW-0597">Phosphoprotein</keyword>
<keyword id="KW-0813">Transport</keyword>
<sequence length="142" mass="15121">MVLSAADKSNVKAAWGKVGGNAGAYGAEALERMFLSFPTTKTYFPHFDLSHGSAQVKGHGEKVAAALTKAVGHLDDLPGTLSDLSDLHAHKLRVDPVNFKLLSHTLLVTLACHLPNDFTPAVHASLDKFLASVGTVLTSKYR</sequence>
<feature type="chain" id="PRO_0000250456" description="Hemoglobin subunit alpha">
    <location>
        <begin position="1"/>
        <end position="142"/>
    </location>
</feature>
<feature type="peptide" id="PRO_0000455914" description="Hemopressin" evidence="2">
    <location>
        <begin position="96"/>
        <end position="104"/>
    </location>
</feature>
<feature type="domain" description="Globin" evidence="4">
    <location>
        <begin position="2"/>
        <end position="142"/>
    </location>
</feature>
<feature type="binding site" evidence="4">
    <location>
        <position position="59"/>
    </location>
    <ligand>
        <name>O2</name>
        <dbReference type="ChEBI" id="CHEBI:15379"/>
    </ligand>
</feature>
<feature type="binding site" description="proximal binding residue" evidence="4">
    <location>
        <position position="88"/>
    </location>
    <ligand>
        <name>heme b</name>
        <dbReference type="ChEBI" id="CHEBI:60344"/>
    </ligand>
    <ligandPart>
        <name>Fe</name>
        <dbReference type="ChEBI" id="CHEBI:18248"/>
    </ligandPart>
</feature>
<feature type="modified residue" description="Phosphoserine" evidence="3">
    <location>
        <position position="4"/>
    </location>
</feature>
<feature type="modified residue" description="N6-succinyllysine" evidence="1">
    <location>
        <position position="8"/>
    </location>
</feature>
<feature type="modified residue" description="N6-succinyllysine" evidence="1">
    <location>
        <position position="12"/>
    </location>
</feature>
<feature type="modified residue" description="N6-acetyllysine; alternate" evidence="3">
    <location>
        <position position="17"/>
    </location>
</feature>
<feature type="modified residue" description="N6-succinyllysine; alternate" evidence="1">
    <location>
        <position position="17"/>
    </location>
</feature>
<feature type="modified residue" description="Phosphotyrosine" evidence="3">
    <location>
        <position position="25"/>
    </location>
</feature>
<feature type="modified residue" description="Phosphoserine" evidence="3">
    <location>
        <position position="36"/>
    </location>
</feature>
<feature type="modified residue" description="N6-succinyllysine" evidence="1">
    <location>
        <position position="41"/>
    </location>
</feature>
<feature type="modified residue" description="Phosphoserine" evidence="3">
    <location>
        <position position="50"/>
    </location>
</feature>
<feature type="modified residue" description="Phosphoserine" evidence="1">
    <location>
        <position position="103"/>
    </location>
</feature>
<feature type="modified residue" description="Phosphothreonine" evidence="1">
    <location>
        <position position="109"/>
    </location>
</feature>
<feature type="modified residue" description="Phosphoserine" evidence="1">
    <location>
        <position position="125"/>
    </location>
</feature>
<feature type="modified residue" description="Phosphoserine" evidence="1">
    <location>
        <position position="132"/>
    </location>
</feature>
<feature type="modified residue" description="Phosphothreonine" evidence="1">
    <location>
        <position position="135"/>
    </location>
</feature>
<feature type="modified residue" description="Phosphothreonine" evidence="1">
    <location>
        <position position="138"/>
    </location>
</feature>
<feature type="modified residue" description="Phosphoserine" evidence="1">
    <location>
        <position position="139"/>
    </location>
</feature>
<accession>Q0ZA50</accession>
<reference key="1">
    <citation type="submission" date="2006-05" db="EMBL/GenBank/DDBJ databases">
        <title>Molecular characterization of hemoglobin alpha chain from a hypoxic tolerance species: Tibetan antelope (Pantholops hodgsonii).</title>
        <authorList>
            <person name="Yang Y.Z."/>
            <person name="Jin G.E."/>
            <person name="Bai Z.Z."/>
            <person name="Ma L."/>
            <person name="Yun H.X."/>
            <person name="Yun D.D."/>
            <person name="Kei S.K."/>
            <person name="Ge R.L."/>
        </authorList>
    </citation>
    <scope>NUCLEOTIDE SEQUENCE [MRNA]</scope>
    <source>
        <tissue>Liver</tissue>
    </source>
</reference>